<proteinExistence type="evidence at transcript level"/>
<name>OPRD_RAT</name>
<comment type="function">
    <text evidence="7 8">G-protein coupled receptor that functions as a receptor for endogenous enkephalins and for a subset of other opioids. Ligand binding causes a conformation change that triggers signaling via guanine nucleotide-binding proteins (G proteins) and modulates the activity of down-stream effectors, such as adenylate cyclase. Signaling leads to the inhibition of adenylate cyclase activity. Inhibits neurotransmitter release by reducing calcium ion currents and increasing potassium ion conductance. Plays a role in the perception of pain and in opiate-mediated analgesia. Plays a role in developing analgesic tolerance to morphine.</text>
</comment>
<comment type="subunit">
    <text evidence="2 3">May form homooligomers. Forms a heterodimer with OPRM1. Interacts with GPRASP1. Interacts with RTP4; the interaction promotes cell surface localization of the OPRD1-OPRM1 heterodimer.</text>
</comment>
<comment type="subcellular location">
    <subcellularLocation>
        <location evidence="7 8">Cell membrane</location>
        <topology evidence="7 8">Multi-pass membrane protein</topology>
    </subcellularLocation>
</comment>
<comment type="tissue specificity">
    <text evidence="7 8">Detected in brain, brain stem and brain cortex.</text>
</comment>
<comment type="PTM">
    <text evidence="2">Ubiquitinated. A basal ubiquitination seems not to be related to degradation. Ubiquitination is increased upon formation of OPRM1:OPRD1 oligomers leading to proteasomal degradation; the ubiquitination is diminished by RTP4.</text>
</comment>
<comment type="similarity">
    <text evidence="5">Belongs to the G-protein coupled receptor 1 family.</text>
</comment>
<evidence type="ECO:0000250" key="1"/>
<evidence type="ECO:0000250" key="2">
    <source>
        <dbReference type="UniProtKB" id="P32300"/>
    </source>
</evidence>
<evidence type="ECO:0000250" key="3">
    <source>
        <dbReference type="UniProtKB" id="P41143"/>
    </source>
</evidence>
<evidence type="ECO:0000255" key="4"/>
<evidence type="ECO:0000255" key="5">
    <source>
        <dbReference type="PROSITE-ProRule" id="PRU00521"/>
    </source>
</evidence>
<evidence type="ECO:0000256" key="6">
    <source>
        <dbReference type="SAM" id="MobiDB-lite"/>
    </source>
</evidence>
<evidence type="ECO:0000269" key="7">
    <source>
    </source>
</evidence>
<evidence type="ECO:0000269" key="8">
    <source>
    </source>
</evidence>
<feature type="chain" id="PRO_0000069965" description="Delta-type opioid receptor">
    <location>
        <begin position="1"/>
        <end position="372"/>
    </location>
</feature>
<feature type="topological domain" description="Extracellular" evidence="1">
    <location>
        <begin position="1"/>
        <end position="47"/>
    </location>
</feature>
<feature type="transmembrane region" description="Helical; Name=1" evidence="1">
    <location>
        <begin position="48"/>
        <end position="75"/>
    </location>
</feature>
<feature type="topological domain" description="Cytoplasmic" evidence="1">
    <location>
        <begin position="76"/>
        <end position="85"/>
    </location>
</feature>
<feature type="transmembrane region" description="Helical; Name=2" evidence="1">
    <location>
        <begin position="86"/>
        <end position="110"/>
    </location>
</feature>
<feature type="topological domain" description="Extracellular" evidence="1">
    <location>
        <begin position="111"/>
        <end position="122"/>
    </location>
</feature>
<feature type="transmembrane region" description="Helical; Name=3" evidence="1">
    <location>
        <begin position="123"/>
        <end position="144"/>
    </location>
</feature>
<feature type="topological domain" description="Cytoplasmic" evidence="1">
    <location>
        <begin position="145"/>
        <end position="163"/>
    </location>
</feature>
<feature type="transmembrane region" description="Helical; Name=4" evidence="1">
    <location>
        <begin position="164"/>
        <end position="186"/>
    </location>
</feature>
<feature type="topological domain" description="Extracellular" evidence="1">
    <location>
        <begin position="187"/>
        <end position="206"/>
    </location>
</feature>
<feature type="transmembrane region" description="Helical; Name=5" evidence="1">
    <location>
        <begin position="207"/>
        <end position="238"/>
    </location>
</feature>
<feature type="topological domain" description="Cytoplasmic" evidence="1">
    <location>
        <begin position="239"/>
        <end position="261"/>
    </location>
</feature>
<feature type="transmembrane region" description="Helical; Name=6" evidence="1">
    <location>
        <begin position="262"/>
        <end position="284"/>
    </location>
</feature>
<feature type="topological domain" description="Extracellular" evidence="1">
    <location>
        <begin position="285"/>
        <end position="299"/>
    </location>
</feature>
<feature type="transmembrane region" description="Helical; Name=7" evidence="1">
    <location>
        <begin position="300"/>
        <end position="321"/>
    </location>
</feature>
<feature type="topological domain" description="Cytoplasmic" evidence="1">
    <location>
        <begin position="322"/>
        <end position="372"/>
    </location>
</feature>
<feature type="region of interest" description="Disordered" evidence="6">
    <location>
        <begin position="340"/>
        <end position="372"/>
    </location>
</feature>
<feature type="lipid moiety-binding region" description="S-palmitoyl cysteine" evidence="4">
    <location>
        <position position="333"/>
    </location>
</feature>
<feature type="glycosylation site" description="N-linked (GlcNAc...) asparagine" evidence="4">
    <location>
        <position position="18"/>
    </location>
</feature>
<feature type="glycosylation site" description="N-linked (GlcNAc...) asparagine" evidence="4">
    <location>
        <position position="33"/>
    </location>
</feature>
<feature type="disulfide bond" evidence="5">
    <location>
        <begin position="121"/>
        <end position="198"/>
    </location>
</feature>
<keyword id="KW-1003">Cell membrane</keyword>
<keyword id="KW-1015">Disulfide bond</keyword>
<keyword id="KW-0297">G-protein coupled receptor</keyword>
<keyword id="KW-0325">Glycoprotein</keyword>
<keyword id="KW-0449">Lipoprotein</keyword>
<keyword id="KW-0472">Membrane</keyword>
<keyword id="KW-0564">Palmitate</keyword>
<keyword id="KW-0675">Receptor</keyword>
<keyword id="KW-1185">Reference proteome</keyword>
<keyword id="KW-0807">Transducer</keyword>
<keyword id="KW-0812">Transmembrane</keyword>
<keyword id="KW-1133">Transmembrane helix</keyword>
<keyword id="KW-0832">Ubl conjugation</keyword>
<reference key="1">
    <citation type="journal article" date="1993" name="FEBS Lett.">
        <title>Primary structures and expression from cDNAs of rat opioid receptor delta- and mu-subtypes.</title>
        <authorList>
            <person name="Fukuda K."/>
            <person name="Kato S."/>
            <person name="Mori K."/>
            <person name="Nishi M."/>
            <person name="Takeshima H."/>
        </authorList>
    </citation>
    <scope>NUCLEOTIDE SEQUENCE [MRNA]</scope>
    <scope>FUNCTION</scope>
    <scope>SUBCELLULAR LOCATION</scope>
    <scope>TISSUE SPECIFICITY</scope>
    <source>
        <tissue>Brain</tissue>
    </source>
</reference>
<reference key="2">
    <citation type="journal article" date="1994" name="J. Neurosci. Res.">
        <title>Molecular cloning and expression of a delta-opioid receptor from rat brain.</title>
        <authorList>
            <person name="Abood M.E."/>
            <person name="Noel M.A."/>
            <person name="Farnsworth J.S."/>
            <person name="Tao Q."/>
        </authorList>
    </citation>
    <scope>NUCLEOTIDE SEQUENCE [MRNA]</scope>
    <scope>FUNCTION</scope>
    <scope>SUBCELLULAR LOCATION</scope>
    <scope>TISSUE SPECIFICITY</scope>
    <source>
        <strain>Sprague-Dawley</strain>
        <tissue>Brain</tissue>
    </source>
</reference>
<organism>
    <name type="scientific">Rattus norvegicus</name>
    <name type="common">Rat</name>
    <dbReference type="NCBI Taxonomy" id="10116"/>
    <lineage>
        <taxon>Eukaryota</taxon>
        <taxon>Metazoa</taxon>
        <taxon>Chordata</taxon>
        <taxon>Craniata</taxon>
        <taxon>Vertebrata</taxon>
        <taxon>Euteleostomi</taxon>
        <taxon>Mammalia</taxon>
        <taxon>Eutheria</taxon>
        <taxon>Euarchontoglires</taxon>
        <taxon>Glires</taxon>
        <taxon>Rodentia</taxon>
        <taxon>Myomorpha</taxon>
        <taxon>Muroidea</taxon>
        <taxon>Muridae</taxon>
        <taxon>Murinae</taxon>
        <taxon>Rattus</taxon>
    </lineage>
</organism>
<sequence>MEPVPSARAELQFSLLANVSDTFPSAFPSASANASGSPGARSASSLALAIAITALYSAVCAVGLLGNVLVMFGIVRYTKLKTATNIYIFNLALADALATSTLPFQSAKYLMETWPFGELLCKAVLSIDYYNMFTSIFTLTMMSVDRYIAVCHPVKALDFRTPAKAKLINICIWVLASGVGVPIMVMAVTQPRDGAVVCTLQFPSPSWYWDTVTKICVFLFAFVVPILIITVCYGLMLLRLRSVRLLSGSKEKDRSLRRITRMVLVVVGAFVVCWAPIHIFVIVWTLVDINRRDPLVVAALHLCIALGYANSSLNPVLYAFLDENFKRCFRQLCRAPCGGQEPGSLRRPRQATARERVTACTPSDGPGGGAAA</sequence>
<accession>P33533</accession>
<protein>
    <recommendedName>
        <fullName>Delta-type opioid receptor</fullName>
        <shortName>D-OR-1</shortName>
        <shortName>DOR-1</shortName>
    </recommendedName>
    <alternativeName>
        <fullName>Opioid receptor A</fullName>
    </alternativeName>
</protein>
<dbReference type="EMBL" id="D16348">
    <property type="protein sequence ID" value="BAA03851.1"/>
    <property type="molecule type" value="mRNA"/>
</dbReference>
<dbReference type="EMBL" id="U00475">
    <property type="protein sequence ID" value="AAA19939.1"/>
    <property type="molecule type" value="mRNA"/>
</dbReference>
<dbReference type="PIR" id="S34592">
    <property type="entry name" value="S34592"/>
</dbReference>
<dbReference type="RefSeq" id="NP_036749.1">
    <property type="nucleotide sequence ID" value="NM_012617.1"/>
</dbReference>
<dbReference type="SMR" id="P33533"/>
<dbReference type="BioGRID" id="246752">
    <property type="interactions" value="1"/>
</dbReference>
<dbReference type="CORUM" id="P33533"/>
<dbReference type="FunCoup" id="P33533">
    <property type="interactions" value="130"/>
</dbReference>
<dbReference type="STRING" id="10116.ENSRNOP00000014084"/>
<dbReference type="BindingDB" id="P33533"/>
<dbReference type="ChEMBL" id="CHEMBL269"/>
<dbReference type="DrugCentral" id="P33533"/>
<dbReference type="GuidetoPHARMACOLOGY" id="317"/>
<dbReference type="GlyCosmos" id="P33533">
    <property type="glycosylation" value="2 sites, No reported glycans"/>
</dbReference>
<dbReference type="GlyGen" id="P33533">
    <property type="glycosylation" value="2 sites"/>
</dbReference>
<dbReference type="iPTMnet" id="P33533"/>
<dbReference type="PhosphoSitePlus" id="P33533"/>
<dbReference type="PaxDb" id="10116-ENSRNOP00000014084"/>
<dbReference type="Ensembl" id="ENSRNOT00000014084.4">
    <property type="protein sequence ID" value="ENSRNOP00000014084.2"/>
    <property type="gene ID" value="ENSRNOG00000010531.4"/>
</dbReference>
<dbReference type="GeneID" id="24613"/>
<dbReference type="KEGG" id="rno:24613"/>
<dbReference type="UCSC" id="RGD:3233">
    <property type="organism name" value="rat"/>
</dbReference>
<dbReference type="AGR" id="RGD:3233"/>
<dbReference type="CTD" id="4985"/>
<dbReference type="RGD" id="3233">
    <property type="gene designation" value="Oprd1"/>
</dbReference>
<dbReference type="eggNOG" id="KOG3656">
    <property type="taxonomic scope" value="Eukaryota"/>
</dbReference>
<dbReference type="GeneTree" id="ENSGT00940000157669"/>
<dbReference type="HOGENOM" id="CLU_009579_8_1_1"/>
<dbReference type="InParanoid" id="P33533"/>
<dbReference type="OMA" id="WGNGTAW"/>
<dbReference type="OrthoDB" id="6076970at2759"/>
<dbReference type="PhylomeDB" id="P33533"/>
<dbReference type="TreeFam" id="TF315737"/>
<dbReference type="Reactome" id="R-RNO-375276">
    <property type="pathway name" value="Peptide ligand-binding receptors"/>
</dbReference>
<dbReference type="Reactome" id="R-RNO-418594">
    <property type="pathway name" value="G alpha (i) signalling events"/>
</dbReference>
<dbReference type="PRO" id="PR:P33533"/>
<dbReference type="Proteomes" id="UP000002494">
    <property type="component" value="Chromosome 5"/>
</dbReference>
<dbReference type="Bgee" id="ENSRNOG00000010531">
    <property type="expression patterns" value="Expressed in frontal cortex and 2 other cell types or tissues"/>
</dbReference>
<dbReference type="GO" id="GO:0043679">
    <property type="term" value="C:axon terminus"/>
    <property type="evidence" value="ECO:0000314"/>
    <property type="project" value="RGD"/>
</dbReference>
<dbReference type="GO" id="GO:0032590">
    <property type="term" value="C:dendrite membrane"/>
    <property type="evidence" value="ECO:0000314"/>
    <property type="project" value="RGD"/>
</dbReference>
<dbReference type="GO" id="GO:0016020">
    <property type="term" value="C:membrane"/>
    <property type="evidence" value="ECO:0000266"/>
    <property type="project" value="RGD"/>
</dbReference>
<dbReference type="GO" id="GO:0043005">
    <property type="term" value="C:neuron projection"/>
    <property type="evidence" value="ECO:0000318"/>
    <property type="project" value="GO_Central"/>
</dbReference>
<dbReference type="GO" id="GO:0098992">
    <property type="term" value="C:neuronal dense core vesicle"/>
    <property type="evidence" value="ECO:0000314"/>
    <property type="project" value="SynGO"/>
</dbReference>
<dbReference type="GO" id="GO:0005886">
    <property type="term" value="C:plasma membrane"/>
    <property type="evidence" value="ECO:0000266"/>
    <property type="project" value="RGD"/>
</dbReference>
<dbReference type="GO" id="GO:0098839">
    <property type="term" value="C:postsynaptic density membrane"/>
    <property type="evidence" value="ECO:0000314"/>
    <property type="project" value="SynGO"/>
</dbReference>
<dbReference type="GO" id="GO:0045211">
    <property type="term" value="C:postsynaptic membrane"/>
    <property type="evidence" value="ECO:0000314"/>
    <property type="project" value="RGD"/>
</dbReference>
<dbReference type="GO" id="GO:0042734">
    <property type="term" value="C:presynaptic membrane"/>
    <property type="evidence" value="ECO:0000314"/>
    <property type="project" value="SynGO"/>
</dbReference>
<dbReference type="GO" id="GO:0097444">
    <property type="term" value="C:spine apparatus"/>
    <property type="evidence" value="ECO:0000314"/>
    <property type="project" value="SynGO"/>
</dbReference>
<dbReference type="GO" id="GO:0030672">
    <property type="term" value="C:synaptic vesicle membrane"/>
    <property type="evidence" value="ECO:0000314"/>
    <property type="project" value="SynGO"/>
</dbReference>
<dbReference type="GO" id="GO:0031982">
    <property type="term" value="C:vesicle"/>
    <property type="evidence" value="ECO:0000314"/>
    <property type="project" value="RGD"/>
</dbReference>
<dbReference type="GO" id="GO:0038046">
    <property type="term" value="F:G protein-coupled enkephalin receptor activity"/>
    <property type="evidence" value="ECO:0000314"/>
    <property type="project" value="RGD"/>
</dbReference>
<dbReference type="GO" id="GO:0004985">
    <property type="term" value="F:G protein-coupled opioid receptor activity"/>
    <property type="evidence" value="ECO:0000266"/>
    <property type="project" value="RGD"/>
</dbReference>
<dbReference type="GO" id="GO:0042923">
    <property type="term" value="F:neuropeptide binding"/>
    <property type="evidence" value="ECO:0000318"/>
    <property type="project" value="GO_Central"/>
</dbReference>
<dbReference type="GO" id="GO:0033612">
    <property type="term" value="F:receptor serine/threonine kinase binding"/>
    <property type="evidence" value="ECO:0000353"/>
    <property type="project" value="RGD"/>
</dbReference>
<dbReference type="GO" id="GO:0007193">
    <property type="term" value="P:adenylate cyclase-inhibiting G protein-coupled receptor signaling pathway"/>
    <property type="evidence" value="ECO:0000266"/>
    <property type="project" value="RGD"/>
</dbReference>
<dbReference type="GO" id="GO:0008344">
    <property type="term" value="P:adult locomotory behavior"/>
    <property type="evidence" value="ECO:0000266"/>
    <property type="project" value="RGD"/>
</dbReference>
<dbReference type="GO" id="GO:0071363">
    <property type="term" value="P:cellular response to growth factor stimulus"/>
    <property type="evidence" value="ECO:0000270"/>
    <property type="project" value="RGD"/>
</dbReference>
<dbReference type="GO" id="GO:0071456">
    <property type="term" value="P:cellular response to hypoxia"/>
    <property type="evidence" value="ECO:0000266"/>
    <property type="project" value="RGD"/>
</dbReference>
<dbReference type="GO" id="GO:0097237">
    <property type="term" value="P:cellular response to toxic substance"/>
    <property type="evidence" value="ECO:0000266"/>
    <property type="project" value="RGD"/>
</dbReference>
<dbReference type="GO" id="GO:0042755">
    <property type="term" value="P:eating behavior"/>
    <property type="evidence" value="ECO:0000315"/>
    <property type="project" value="RGD"/>
</dbReference>
<dbReference type="GO" id="GO:0038003">
    <property type="term" value="P:G protein-coupled opioid receptor signaling pathway"/>
    <property type="evidence" value="ECO:0000266"/>
    <property type="project" value="RGD"/>
</dbReference>
<dbReference type="GO" id="GO:0007186">
    <property type="term" value="P:G protein-coupled receptor signaling pathway"/>
    <property type="evidence" value="ECO:0000266"/>
    <property type="project" value="RGD"/>
</dbReference>
<dbReference type="GO" id="GO:0010629">
    <property type="term" value="P:negative regulation of gene expression"/>
    <property type="evidence" value="ECO:0000266"/>
    <property type="project" value="RGD"/>
</dbReference>
<dbReference type="GO" id="GO:0031333">
    <property type="term" value="P:negative regulation of protein-containing complex assembly"/>
    <property type="evidence" value="ECO:0000266"/>
    <property type="project" value="RGD"/>
</dbReference>
<dbReference type="GO" id="GO:0007218">
    <property type="term" value="P:neuropeptide signaling pathway"/>
    <property type="evidence" value="ECO:0000266"/>
    <property type="project" value="RGD"/>
</dbReference>
<dbReference type="GO" id="GO:0007200">
    <property type="term" value="P:phospholipase C-activating G protein-coupled receptor signaling pathway"/>
    <property type="evidence" value="ECO:0000314"/>
    <property type="project" value="UniProtKB"/>
</dbReference>
<dbReference type="GO" id="GO:0051924">
    <property type="term" value="P:regulation of calcium ion transport"/>
    <property type="evidence" value="ECO:0000315"/>
    <property type="project" value="RGD"/>
</dbReference>
<dbReference type="GO" id="GO:0051881">
    <property type="term" value="P:regulation of mitochondrial membrane potential"/>
    <property type="evidence" value="ECO:0000266"/>
    <property type="project" value="RGD"/>
</dbReference>
<dbReference type="GO" id="GO:0045471">
    <property type="term" value="P:response to ethanol"/>
    <property type="evidence" value="ECO:0000270"/>
    <property type="project" value="RGD"/>
</dbReference>
<dbReference type="GO" id="GO:0035094">
    <property type="term" value="P:response to nicotine"/>
    <property type="evidence" value="ECO:0000270"/>
    <property type="project" value="RGD"/>
</dbReference>
<dbReference type="CDD" id="cd15089">
    <property type="entry name" value="7tmA_Delta_opioid_R"/>
    <property type="match status" value="1"/>
</dbReference>
<dbReference type="FunFam" id="1.20.1070.10:FF:000014">
    <property type="entry name" value="Kappa-type opioid receptor 1"/>
    <property type="match status" value="1"/>
</dbReference>
<dbReference type="Gene3D" id="1.20.1070.10">
    <property type="entry name" value="Rhodopsin 7-helix transmembrane proteins"/>
    <property type="match status" value="1"/>
</dbReference>
<dbReference type="InterPro" id="IPR000321">
    <property type="entry name" value="Delta_opi_rcpt"/>
</dbReference>
<dbReference type="InterPro" id="IPR000276">
    <property type="entry name" value="GPCR_Rhodpsn"/>
</dbReference>
<dbReference type="InterPro" id="IPR017452">
    <property type="entry name" value="GPCR_Rhodpsn_7TM"/>
</dbReference>
<dbReference type="InterPro" id="IPR001418">
    <property type="entry name" value="Opioid_rcpt"/>
</dbReference>
<dbReference type="PANTHER" id="PTHR24229:SF2">
    <property type="entry name" value="DELTA-TYPE OPIOID RECEPTOR"/>
    <property type="match status" value="1"/>
</dbReference>
<dbReference type="PANTHER" id="PTHR24229">
    <property type="entry name" value="NEUROPEPTIDES RECEPTOR"/>
    <property type="match status" value="1"/>
</dbReference>
<dbReference type="Pfam" id="PF00001">
    <property type="entry name" value="7tm_1"/>
    <property type="match status" value="1"/>
</dbReference>
<dbReference type="PRINTS" id="PR00525">
    <property type="entry name" value="DELTAOPIOIDR"/>
</dbReference>
<dbReference type="PRINTS" id="PR00237">
    <property type="entry name" value="GPCRRHODOPSN"/>
</dbReference>
<dbReference type="PRINTS" id="PR00384">
    <property type="entry name" value="OPIOIDR"/>
</dbReference>
<dbReference type="SMART" id="SM01381">
    <property type="entry name" value="7TM_GPCR_Srsx"/>
    <property type="match status" value="1"/>
</dbReference>
<dbReference type="SUPFAM" id="SSF81321">
    <property type="entry name" value="Family A G protein-coupled receptor-like"/>
    <property type="match status" value="1"/>
</dbReference>
<dbReference type="PROSITE" id="PS00237">
    <property type="entry name" value="G_PROTEIN_RECEP_F1_1"/>
    <property type="match status" value="1"/>
</dbReference>
<dbReference type="PROSITE" id="PS50262">
    <property type="entry name" value="G_PROTEIN_RECEP_F1_2"/>
    <property type="match status" value="1"/>
</dbReference>
<gene>
    <name type="primary">Oprd1</name>
    <name type="synonym">Ror-a</name>
</gene>